<protein>
    <recommendedName>
        <fullName evidence="1">tRNA-modifying protein YgfZ</fullName>
    </recommendedName>
</protein>
<dbReference type="EMBL" id="CP000653">
    <property type="protein sequence ID" value="ABP61979.1"/>
    <property type="molecule type" value="Genomic_DNA"/>
</dbReference>
<dbReference type="RefSeq" id="WP_015960307.1">
    <property type="nucleotide sequence ID" value="NC_009436.1"/>
</dbReference>
<dbReference type="SMR" id="A4WE49"/>
<dbReference type="STRING" id="399742.Ent638_3316"/>
<dbReference type="KEGG" id="ent:Ent638_3316"/>
<dbReference type="eggNOG" id="COG0354">
    <property type="taxonomic scope" value="Bacteria"/>
</dbReference>
<dbReference type="HOGENOM" id="CLU_007884_6_1_6"/>
<dbReference type="OrthoDB" id="9796287at2"/>
<dbReference type="Proteomes" id="UP000000230">
    <property type="component" value="Chromosome"/>
</dbReference>
<dbReference type="GO" id="GO:0005737">
    <property type="term" value="C:cytoplasm"/>
    <property type="evidence" value="ECO:0007669"/>
    <property type="project" value="UniProtKB-SubCell"/>
</dbReference>
<dbReference type="GO" id="GO:0005542">
    <property type="term" value="F:folic acid binding"/>
    <property type="evidence" value="ECO:0007669"/>
    <property type="project" value="UniProtKB-UniRule"/>
</dbReference>
<dbReference type="GO" id="GO:0016226">
    <property type="term" value="P:iron-sulfur cluster assembly"/>
    <property type="evidence" value="ECO:0007669"/>
    <property type="project" value="TreeGrafter"/>
</dbReference>
<dbReference type="GO" id="GO:0009451">
    <property type="term" value="P:RNA modification"/>
    <property type="evidence" value="ECO:0007669"/>
    <property type="project" value="InterPro"/>
</dbReference>
<dbReference type="GO" id="GO:0008033">
    <property type="term" value="P:tRNA processing"/>
    <property type="evidence" value="ECO:0007669"/>
    <property type="project" value="UniProtKB-UniRule"/>
</dbReference>
<dbReference type="FunFam" id="2.40.30.160:FF:000001">
    <property type="entry name" value="tRNA-modifying protein YgfZ"/>
    <property type="match status" value="1"/>
</dbReference>
<dbReference type="FunFam" id="3.30.70.1400:FF:000002">
    <property type="entry name" value="tRNA-modifying protein YgfZ"/>
    <property type="match status" value="1"/>
</dbReference>
<dbReference type="FunFam" id="3.30.70.1630:FF:000001">
    <property type="entry name" value="tRNA-modifying protein YgfZ"/>
    <property type="match status" value="1"/>
</dbReference>
<dbReference type="Gene3D" id="2.40.30.160">
    <property type="match status" value="1"/>
</dbReference>
<dbReference type="Gene3D" id="3.30.70.1630">
    <property type="match status" value="1"/>
</dbReference>
<dbReference type="Gene3D" id="3.30.70.1400">
    <property type="entry name" value="Aminomethyltransferase beta-barrel domains"/>
    <property type="match status" value="1"/>
</dbReference>
<dbReference type="HAMAP" id="MF_01175">
    <property type="entry name" value="tRNA_modifying_YgfZ"/>
    <property type="match status" value="1"/>
</dbReference>
<dbReference type="InterPro" id="IPR006222">
    <property type="entry name" value="GCV_T_N"/>
</dbReference>
<dbReference type="InterPro" id="IPR029043">
    <property type="entry name" value="GcvT/YgfZ_C"/>
</dbReference>
<dbReference type="InterPro" id="IPR023758">
    <property type="entry name" value="tRNA-modifying_YgfZ"/>
</dbReference>
<dbReference type="InterPro" id="IPR045179">
    <property type="entry name" value="YgfZ/GcvT"/>
</dbReference>
<dbReference type="InterPro" id="IPR017703">
    <property type="entry name" value="YgfZ/GcvT_CS"/>
</dbReference>
<dbReference type="InterPro" id="IPR048451">
    <property type="entry name" value="YgfZ_barrel"/>
</dbReference>
<dbReference type="NCBIfam" id="NF007110">
    <property type="entry name" value="PRK09559.1"/>
    <property type="match status" value="1"/>
</dbReference>
<dbReference type="NCBIfam" id="TIGR03317">
    <property type="entry name" value="ygfZ_signature"/>
    <property type="match status" value="1"/>
</dbReference>
<dbReference type="PANTHER" id="PTHR22602">
    <property type="entry name" value="TRANSFERASE CAF17, MITOCHONDRIAL-RELATED"/>
    <property type="match status" value="1"/>
</dbReference>
<dbReference type="PANTHER" id="PTHR22602:SF0">
    <property type="entry name" value="TRANSFERASE CAF17, MITOCHONDRIAL-RELATED"/>
    <property type="match status" value="1"/>
</dbReference>
<dbReference type="Pfam" id="PF01571">
    <property type="entry name" value="GCV_T"/>
    <property type="match status" value="1"/>
</dbReference>
<dbReference type="Pfam" id="PF21130">
    <property type="entry name" value="YgfZ_barrel"/>
    <property type="match status" value="1"/>
</dbReference>
<dbReference type="SUPFAM" id="SSF101790">
    <property type="entry name" value="Aminomethyltransferase beta-barrel domain"/>
    <property type="match status" value="1"/>
</dbReference>
<dbReference type="SUPFAM" id="SSF103025">
    <property type="entry name" value="Folate-binding domain"/>
    <property type="match status" value="1"/>
</dbReference>
<feature type="chain" id="PRO_1000065775" description="tRNA-modifying protein YgfZ">
    <location>
        <begin position="1"/>
        <end position="326"/>
    </location>
</feature>
<feature type="binding site" evidence="1">
    <location>
        <position position="27"/>
    </location>
    <ligand>
        <name>folate</name>
        <dbReference type="ChEBI" id="CHEBI:62501"/>
    </ligand>
</feature>
<feature type="binding site" evidence="1">
    <location>
        <position position="189"/>
    </location>
    <ligand>
        <name>folate</name>
        <dbReference type="ChEBI" id="CHEBI:62501"/>
    </ligand>
</feature>
<name>YGFZ_ENT38</name>
<keyword id="KW-0963">Cytoplasm</keyword>
<keyword id="KW-0290">Folate-binding</keyword>
<keyword id="KW-0819">tRNA processing</keyword>
<sequence>MAFNPFPPRQPVASARLPLTLISLDDWALATISGADSEKYLQGQVTADVAQLGEHQHLLVAHCDPKGKMWSNLRLFRRQDGFACIERRSLRDAQLTELKKYAVFSKVTIVADDENVLLGVAGFQARAALKNLFSELPDADKPLINDGVTSLLWFEHPDERFLLVTDVATADRVTEALRGEAQFNNSQQWLALNIEAGLPIIDAVNSAQFIPQATNIQALGGISFKKGCYTGQEMVARAKFRGANKRALWYLAGNASRVPEAGEDLELKMGENWRRTGTVLAAVQLDDGRVLVQVVMNNDMEADSVFRVRDDANTLSIQPLPYSLEE</sequence>
<gene>
    <name type="ordered locus">Ent638_3316</name>
</gene>
<comment type="function">
    <text evidence="1">Folate-binding protein involved in regulating the level of ATP-DnaA and in the modification of some tRNAs. It is probably a key factor in regulatory networks that act via tRNA modification, such as initiation of chromosomal replication.</text>
</comment>
<comment type="subcellular location">
    <subcellularLocation>
        <location evidence="1">Cytoplasm</location>
    </subcellularLocation>
</comment>
<comment type="similarity">
    <text evidence="1">Belongs to the tRNA-modifying YgfZ family.</text>
</comment>
<proteinExistence type="inferred from homology"/>
<reference key="1">
    <citation type="journal article" date="2010" name="PLoS Genet.">
        <title>Genome sequence of the plant growth promoting endophytic bacterium Enterobacter sp. 638.</title>
        <authorList>
            <person name="Taghavi S."/>
            <person name="van der Lelie D."/>
            <person name="Hoffman A."/>
            <person name="Zhang Y.B."/>
            <person name="Walla M.D."/>
            <person name="Vangronsveld J."/>
            <person name="Newman L."/>
            <person name="Monchy S."/>
        </authorList>
    </citation>
    <scope>NUCLEOTIDE SEQUENCE [LARGE SCALE GENOMIC DNA]</scope>
    <source>
        <strain>638</strain>
    </source>
</reference>
<evidence type="ECO:0000255" key="1">
    <source>
        <dbReference type="HAMAP-Rule" id="MF_01175"/>
    </source>
</evidence>
<organism>
    <name type="scientific">Enterobacter sp. (strain 638)</name>
    <dbReference type="NCBI Taxonomy" id="399742"/>
    <lineage>
        <taxon>Bacteria</taxon>
        <taxon>Pseudomonadati</taxon>
        <taxon>Pseudomonadota</taxon>
        <taxon>Gammaproteobacteria</taxon>
        <taxon>Enterobacterales</taxon>
        <taxon>Enterobacteriaceae</taxon>
        <taxon>Enterobacter</taxon>
    </lineage>
</organism>
<accession>A4WE49</accession>